<reference key="1">
    <citation type="journal article" date="2002" name="Proc. Natl. Acad. Sci. U.S.A.">
        <title>The Brucella suis genome reveals fundamental similarities between animal and plant pathogens and symbionts.</title>
        <authorList>
            <person name="Paulsen I.T."/>
            <person name="Seshadri R."/>
            <person name="Nelson K.E."/>
            <person name="Eisen J.A."/>
            <person name="Heidelberg J.F."/>
            <person name="Read T.D."/>
            <person name="Dodson R.J."/>
            <person name="Umayam L.A."/>
            <person name="Brinkac L.M."/>
            <person name="Beanan M.J."/>
            <person name="Daugherty S.C."/>
            <person name="DeBoy R.T."/>
            <person name="Durkin A.S."/>
            <person name="Kolonay J.F."/>
            <person name="Madupu R."/>
            <person name="Nelson W.C."/>
            <person name="Ayodeji B."/>
            <person name="Kraul M."/>
            <person name="Shetty J."/>
            <person name="Malek J.A."/>
            <person name="Van Aken S.E."/>
            <person name="Riedmuller S."/>
            <person name="Tettelin H."/>
            <person name="Gill S.R."/>
            <person name="White O."/>
            <person name="Salzberg S.L."/>
            <person name="Hoover D.L."/>
            <person name="Lindler L.E."/>
            <person name="Halling S.M."/>
            <person name="Boyle S.M."/>
            <person name="Fraser C.M."/>
        </authorList>
    </citation>
    <scope>NUCLEOTIDE SEQUENCE [LARGE SCALE GENOMIC DNA]</scope>
    <source>
        <strain>1330</strain>
    </source>
</reference>
<reference key="2">
    <citation type="journal article" date="2011" name="J. Bacteriol.">
        <title>Revised genome sequence of Brucella suis 1330.</title>
        <authorList>
            <person name="Tae H."/>
            <person name="Shallom S."/>
            <person name="Settlage R."/>
            <person name="Preston D."/>
            <person name="Adams L.G."/>
            <person name="Garner H.R."/>
        </authorList>
    </citation>
    <scope>NUCLEOTIDE SEQUENCE [LARGE SCALE GENOMIC DNA]</scope>
    <source>
        <strain>1330</strain>
    </source>
</reference>
<name>SYR_BRUSU</name>
<sequence>MNIFADFDARIKKTLQDIDLKPKDGGELDLSRIGVEPPRDASHGDIATNAAMVLSKAVGQNPRELAARIAEALKADEDVESVDVAGPGFINLRLKASYWQRELLVMLNEGTDFGRSRLGAGKKVNVEYVSANPTGPMHVGHCRGAVVGDVLANLLKFAGYDVVKEYYINDAGAQIDVLARSVMLRYREALGESIGEIPAGLYPGDYLVRVGQELAGEFGTKLLEMPEAEALAIVKDRTIDAMMAMIRADLDALNVHHDVFYSERKLHVDHARAIRNAINDLTLKGHVYKGKLPPPKGQLPEDWEDREQTLFRSTEVGDDIDRPLMKSDGSFTYFAGDVAYFKDKYDRGFNEMIYVLGADHGGYVKRLEAVARAVSDGKAKLTVLLCQLVKLFRNGEPVRMSKRAGEFITLRDVVDEVGRDPVRFMMLYRKNDAPLDFDFAKVTEQSKDNPVFYVQYASARCHSVFRQAADQLGLVDLDRVAMGSHFEKLTDESEIALVRKLAEYPRLIESAAIHQEPHRLAFYLYDLASSFHSQWNRGTENPDLRFIKVNDPDLSLARLGLVQVVSDVLTSGLTIIGADAPTEMR</sequence>
<proteinExistence type="inferred from homology"/>
<evidence type="ECO:0000255" key="1">
    <source>
        <dbReference type="HAMAP-Rule" id="MF_00123"/>
    </source>
</evidence>
<feature type="chain" id="PRO_0000151538" description="Arginine--tRNA ligase">
    <location>
        <begin position="1"/>
        <end position="585"/>
    </location>
</feature>
<feature type="short sequence motif" description="'HIGH' region">
    <location>
        <begin position="131"/>
        <end position="141"/>
    </location>
</feature>
<organism>
    <name type="scientific">Brucella suis biovar 1 (strain 1330)</name>
    <dbReference type="NCBI Taxonomy" id="204722"/>
    <lineage>
        <taxon>Bacteria</taxon>
        <taxon>Pseudomonadati</taxon>
        <taxon>Pseudomonadota</taxon>
        <taxon>Alphaproteobacteria</taxon>
        <taxon>Hyphomicrobiales</taxon>
        <taxon>Brucellaceae</taxon>
        <taxon>Brucella/Ochrobactrum group</taxon>
        <taxon>Brucella</taxon>
    </lineage>
</organism>
<dbReference type="EC" id="6.1.1.19" evidence="1"/>
<dbReference type="EMBL" id="AE014291">
    <property type="protein sequence ID" value="AAN29805.1"/>
    <property type="molecule type" value="Genomic_DNA"/>
</dbReference>
<dbReference type="EMBL" id="CP002997">
    <property type="protein sequence ID" value="AEM18222.1"/>
    <property type="molecule type" value="Genomic_DNA"/>
</dbReference>
<dbReference type="RefSeq" id="WP_004689634.1">
    <property type="nucleotide sequence ID" value="NZ_KN046804.1"/>
</dbReference>
<dbReference type="SMR" id="Q8G146"/>
<dbReference type="GeneID" id="97533827"/>
<dbReference type="KEGG" id="bms:BR0877"/>
<dbReference type="KEGG" id="bsi:BS1330_I0873"/>
<dbReference type="PATRIC" id="fig|204722.21.peg.2568"/>
<dbReference type="HOGENOM" id="CLU_006406_0_1_5"/>
<dbReference type="PhylomeDB" id="Q8G146"/>
<dbReference type="Proteomes" id="UP000007104">
    <property type="component" value="Chromosome I"/>
</dbReference>
<dbReference type="GO" id="GO:0005737">
    <property type="term" value="C:cytoplasm"/>
    <property type="evidence" value="ECO:0007669"/>
    <property type="project" value="UniProtKB-SubCell"/>
</dbReference>
<dbReference type="GO" id="GO:0004814">
    <property type="term" value="F:arginine-tRNA ligase activity"/>
    <property type="evidence" value="ECO:0007669"/>
    <property type="project" value="UniProtKB-UniRule"/>
</dbReference>
<dbReference type="GO" id="GO:0005524">
    <property type="term" value="F:ATP binding"/>
    <property type="evidence" value="ECO:0007669"/>
    <property type="project" value="UniProtKB-UniRule"/>
</dbReference>
<dbReference type="GO" id="GO:0006420">
    <property type="term" value="P:arginyl-tRNA aminoacylation"/>
    <property type="evidence" value="ECO:0007669"/>
    <property type="project" value="UniProtKB-UniRule"/>
</dbReference>
<dbReference type="CDD" id="cd00671">
    <property type="entry name" value="ArgRS_core"/>
    <property type="match status" value="1"/>
</dbReference>
<dbReference type="Gene3D" id="3.30.1360.70">
    <property type="entry name" value="Arginyl tRNA synthetase N-terminal domain"/>
    <property type="match status" value="1"/>
</dbReference>
<dbReference type="Gene3D" id="3.40.50.620">
    <property type="entry name" value="HUPs"/>
    <property type="match status" value="1"/>
</dbReference>
<dbReference type="Gene3D" id="1.10.730.10">
    <property type="entry name" value="Isoleucyl-tRNA Synthetase, Domain 1"/>
    <property type="match status" value="1"/>
</dbReference>
<dbReference type="HAMAP" id="MF_00123">
    <property type="entry name" value="Arg_tRNA_synth"/>
    <property type="match status" value="1"/>
</dbReference>
<dbReference type="InterPro" id="IPR001412">
    <property type="entry name" value="aa-tRNA-synth_I_CS"/>
</dbReference>
<dbReference type="InterPro" id="IPR001278">
    <property type="entry name" value="Arg-tRNA-ligase"/>
</dbReference>
<dbReference type="InterPro" id="IPR005148">
    <property type="entry name" value="Arg-tRNA-synth_N"/>
</dbReference>
<dbReference type="InterPro" id="IPR036695">
    <property type="entry name" value="Arg-tRNA-synth_N_sf"/>
</dbReference>
<dbReference type="InterPro" id="IPR035684">
    <property type="entry name" value="ArgRS_core"/>
</dbReference>
<dbReference type="InterPro" id="IPR008909">
    <property type="entry name" value="DALR_anticod-bd"/>
</dbReference>
<dbReference type="InterPro" id="IPR014729">
    <property type="entry name" value="Rossmann-like_a/b/a_fold"/>
</dbReference>
<dbReference type="InterPro" id="IPR009080">
    <property type="entry name" value="tRNAsynth_Ia_anticodon-bd"/>
</dbReference>
<dbReference type="NCBIfam" id="TIGR00456">
    <property type="entry name" value="argS"/>
    <property type="match status" value="1"/>
</dbReference>
<dbReference type="PANTHER" id="PTHR11956:SF5">
    <property type="entry name" value="ARGININE--TRNA LIGASE, CYTOPLASMIC"/>
    <property type="match status" value="1"/>
</dbReference>
<dbReference type="PANTHER" id="PTHR11956">
    <property type="entry name" value="ARGINYL-TRNA SYNTHETASE"/>
    <property type="match status" value="1"/>
</dbReference>
<dbReference type="Pfam" id="PF03485">
    <property type="entry name" value="Arg_tRNA_synt_N"/>
    <property type="match status" value="1"/>
</dbReference>
<dbReference type="Pfam" id="PF05746">
    <property type="entry name" value="DALR_1"/>
    <property type="match status" value="1"/>
</dbReference>
<dbReference type="Pfam" id="PF00750">
    <property type="entry name" value="tRNA-synt_1d"/>
    <property type="match status" value="1"/>
</dbReference>
<dbReference type="PRINTS" id="PR01038">
    <property type="entry name" value="TRNASYNTHARG"/>
</dbReference>
<dbReference type="SMART" id="SM01016">
    <property type="entry name" value="Arg_tRNA_synt_N"/>
    <property type="match status" value="1"/>
</dbReference>
<dbReference type="SMART" id="SM00836">
    <property type="entry name" value="DALR_1"/>
    <property type="match status" value="1"/>
</dbReference>
<dbReference type="SUPFAM" id="SSF47323">
    <property type="entry name" value="Anticodon-binding domain of a subclass of class I aminoacyl-tRNA synthetases"/>
    <property type="match status" value="1"/>
</dbReference>
<dbReference type="SUPFAM" id="SSF55190">
    <property type="entry name" value="Arginyl-tRNA synthetase (ArgRS), N-terminal 'additional' domain"/>
    <property type="match status" value="1"/>
</dbReference>
<dbReference type="SUPFAM" id="SSF52374">
    <property type="entry name" value="Nucleotidylyl transferase"/>
    <property type="match status" value="1"/>
</dbReference>
<dbReference type="PROSITE" id="PS00178">
    <property type="entry name" value="AA_TRNA_LIGASE_I"/>
    <property type="match status" value="1"/>
</dbReference>
<comment type="catalytic activity">
    <reaction evidence="1">
        <text>tRNA(Arg) + L-arginine + ATP = L-arginyl-tRNA(Arg) + AMP + diphosphate</text>
        <dbReference type="Rhea" id="RHEA:20301"/>
        <dbReference type="Rhea" id="RHEA-COMP:9658"/>
        <dbReference type="Rhea" id="RHEA-COMP:9673"/>
        <dbReference type="ChEBI" id="CHEBI:30616"/>
        <dbReference type="ChEBI" id="CHEBI:32682"/>
        <dbReference type="ChEBI" id="CHEBI:33019"/>
        <dbReference type="ChEBI" id="CHEBI:78442"/>
        <dbReference type="ChEBI" id="CHEBI:78513"/>
        <dbReference type="ChEBI" id="CHEBI:456215"/>
        <dbReference type="EC" id="6.1.1.19"/>
    </reaction>
</comment>
<comment type="subunit">
    <text evidence="1">Monomer.</text>
</comment>
<comment type="subcellular location">
    <subcellularLocation>
        <location evidence="1">Cytoplasm</location>
    </subcellularLocation>
</comment>
<comment type="similarity">
    <text evidence="1">Belongs to the class-I aminoacyl-tRNA synthetase family.</text>
</comment>
<protein>
    <recommendedName>
        <fullName evidence="1">Arginine--tRNA ligase</fullName>
        <ecNumber evidence="1">6.1.1.19</ecNumber>
    </recommendedName>
    <alternativeName>
        <fullName evidence="1">Arginyl-tRNA synthetase</fullName>
        <shortName evidence="1">ArgRS</shortName>
    </alternativeName>
</protein>
<accession>Q8G146</accession>
<accession>G0K9A5</accession>
<gene>
    <name evidence="1" type="primary">argS</name>
    <name type="ordered locus">BR0877</name>
    <name type="ordered locus">BS1330_I0873</name>
</gene>
<keyword id="KW-0030">Aminoacyl-tRNA synthetase</keyword>
<keyword id="KW-0067">ATP-binding</keyword>
<keyword id="KW-0963">Cytoplasm</keyword>
<keyword id="KW-0436">Ligase</keyword>
<keyword id="KW-0547">Nucleotide-binding</keyword>
<keyword id="KW-0648">Protein biosynthesis</keyword>